<evidence type="ECO:0000255" key="1"/>
<evidence type="ECO:0000256" key="2">
    <source>
        <dbReference type="SAM" id="MobiDB-lite"/>
    </source>
</evidence>
<evidence type="ECO:0000269" key="3">
    <source>
    </source>
</evidence>
<evidence type="ECO:0000303" key="4">
    <source>
    </source>
</evidence>
<evidence type="ECO:0000305" key="5"/>
<evidence type="ECO:0000305" key="6">
    <source>
    </source>
</evidence>
<evidence type="ECO:0000312" key="7">
    <source>
        <dbReference type="EMBL" id="ADE01390.1"/>
    </source>
</evidence>
<comment type="function">
    <text evidence="3">Part of the ABC transporter complex XacGHIJK involved in the uptake of xylose and arabinose.</text>
</comment>
<comment type="subunit">
    <text evidence="6">The complex is composed of two ATP-binding proteins (XacJ and XacK), two transmembrane proteins (XacH and XacI) and a solute-binding protein (XacG).</text>
</comment>
<comment type="subcellular location">
    <subcellularLocation>
        <location evidence="5">Cell membrane</location>
        <topology evidence="1">Single-pass membrane protein</topology>
        <orientation evidence="6">Extracellular side</orientation>
    </subcellularLocation>
</comment>
<comment type="induction">
    <text evidence="3">Transcriptionally up-regulated by both L-arabinose and D-xylose via the pentose-specific regulator XacR.</text>
</comment>
<comment type="disruption phenotype">
    <text evidence="3">Deletion mutant shows decreased growth rate on arabinose or xylose. It cannot grow on low concentrations of arabinose or xylose.</text>
</comment>
<comment type="similarity">
    <text evidence="5">Belongs to the bacterial solute-binding protein 1 family.</text>
</comment>
<dbReference type="EMBL" id="CP001953">
    <property type="protein sequence ID" value="ADE01390.1"/>
    <property type="molecule type" value="Genomic_DNA"/>
</dbReference>
<dbReference type="SMR" id="D4GP35"/>
<dbReference type="TCDB" id="3.A.1.1.56">
    <property type="family name" value="the atp-binding cassette (abc) superfamily"/>
</dbReference>
<dbReference type="PaxDb" id="309800-C498_01590"/>
<dbReference type="EnsemblBacteria" id="ADE01390">
    <property type="protein sequence ID" value="ADE01390"/>
    <property type="gene ID" value="HVO_B0034"/>
</dbReference>
<dbReference type="KEGG" id="hvo:HVO_B0034"/>
<dbReference type="eggNOG" id="arCOG00150">
    <property type="taxonomic scope" value="Archaea"/>
</dbReference>
<dbReference type="HOGENOM" id="CLU_031285_15_1_2"/>
<dbReference type="Proteomes" id="UP000008243">
    <property type="component" value="Plasmid pHV3"/>
</dbReference>
<dbReference type="GO" id="GO:0005886">
    <property type="term" value="C:plasma membrane"/>
    <property type="evidence" value="ECO:0007669"/>
    <property type="project" value="UniProtKB-SubCell"/>
</dbReference>
<dbReference type="Gene3D" id="3.40.190.10">
    <property type="entry name" value="Periplasmic binding protein-like II"/>
    <property type="match status" value="2"/>
</dbReference>
<dbReference type="InterPro" id="IPR050490">
    <property type="entry name" value="Bact_solute-bd_prot1"/>
</dbReference>
<dbReference type="InterPro" id="IPR006059">
    <property type="entry name" value="SBP"/>
</dbReference>
<dbReference type="PANTHER" id="PTHR43649">
    <property type="entry name" value="ARABINOSE-BINDING PROTEIN-RELATED"/>
    <property type="match status" value="1"/>
</dbReference>
<dbReference type="PANTHER" id="PTHR43649:SF29">
    <property type="entry name" value="OSMOPROTECTIVE COMPOUNDS-BINDING PROTEIN GGTB"/>
    <property type="match status" value="1"/>
</dbReference>
<dbReference type="Pfam" id="PF01547">
    <property type="entry name" value="SBP_bac_1"/>
    <property type="match status" value="1"/>
</dbReference>
<dbReference type="SUPFAM" id="SSF53850">
    <property type="entry name" value="Periplasmic binding protein-like II"/>
    <property type="match status" value="1"/>
</dbReference>
<organism>
    <name type="scientific">Haloferax volcanii (strain ATCC 29605 / DSM 3757 / JCM 8879 / NBRC 14742 / NCIMB 2012 / VKM B-1768 / DS2)</name>
    <name type="common">Halobacterium volcanii</name>
    <dbReference type="NCBI Taxonomy" id="309800"/>
    <lineage>
        <taxon>Archaea</taxon>
        <taxon>Methanobacteriati</taxon>
        <taxon>Methanobacteriota</taxon>
        <taxon>Stenosarchaea group</taxon>
        <taxon>Halobacteria</taxon>
        <taxon>Halobacteriales</taxon>
        <taxon>Haloferacaceae</taxon>
        <taxon>Haloferax</taxon>
    </lineage>
</organism>
<keyword id="KW-1003">Cell membrane</keyword>
<keyword id="KW-0472">Membrane</keyword>
<keyword id="KW-0614">Plasmid</keyword>
<keyword id="KW-1185">Reference proteome</keyword>
<keyword id="KW-0762">Sugar transport</keyword>
<keyword id="KW-0812">Transmembrane</keyword>
<keyword id="KW-1133">Transmembrane helix</keyword>
<keyword id="KW-0813">Transport</keyword>
<gene>
    <name evidence="4" type="primary">xacG</name>
    <name evidence="7" type="synonym">tsgA7</name>
    <name evidence="7" type="ordered locus">HVO_B0034</name>
</gene>
<proteinExistence type="evidence at protein level"/>
<geneLocation type="plasmid">
    <name>pHV3</name>
</geneLocation>
<name>XACG_HALVD</name>
<reference key="1">
    <citation type="journal article" date="2010" name="PLoS ONE">
        <title>The complete genome sequence of Haloferax volcanii DS2, a model archaeon.</title>
        <authorList>
            <person name="Hartman A.L."/>
            <person name="Norais C."/>
            <person name="Badger J.H."/>
            <person name="Delmas S."/>
            <person name="Haldenby S."/>
            <person name="Madupu R."/>
            <person name="Robinson J."/>
            <person name="Khouri H."/>
            <person name="Ren Q."/>
            <person name="Lowe T.M."/>
            <person name="Maupin-Furlow J."/>
            <person name="Pohlschroder M."/>
            <person name="Daniels C."/>
            <person name="Pfeiffer F."/>
            <person name="Allers T."/>
            <person name="Eisen J.A."/>
        </authorList>
    </citation>
    <scope>NUCLEOTIDE SEQUENCE [LARGE SCALE GENOMIC DNA]</scope>
    <source>
        <strain>ATCC 29605 / DSM 3757 / JCM 8879 / NBRC 14742 / NCIMB 2012 / VKM B-1768 / DS2</strain>
    </source>
</reference>
<reference key="2">
    <citation type="journal article" date="2019" name="FEMS Microbiol. Lett.">
        <title>Uptake of D-xylose and L-arabinose in Haloferax volcanii involves an ABC transporter of the CUT1 subfamily.</title>
        <authorList>
            <person name="Johnsen U."/>
            <person name="Ortjohann M."/>
            <person name="Sutter J.M."/>
            <person name="Geweke S."/>
            <person name="Schoenheit P."/>
        </authorList>
    </citation>
    <scope>FUNCTION</scope>
    <scope>SUBUNIT</scope>
    <scope>SUBCELLULAR LOCATION</scope>
    <scope>INDUCTION</scope>
    <scope>DISRUPTION PHENOTYPE</scope>
    <source>
        <strain>DS2 / DS70 / H26</strain>
    </source>
</reference>
<accession>D4GP35</accession>
<feature type="chain" id="PRO_0000449393" description="Xylose/arabinose-binding protein XacG">
    <location>
        <begin position="1"/>
        <end position="459"/>
    </location>
</feature>
<feature type="transmembrane region" description="Helical" evidence="1">
    <location>
        <begin position="19"/>
        <end position="36"/>
    </location>
</feature>
<feature type="region of interest" description="Disordered" evidence="2">
    <location>
        <begin position="27"/>
        <end position="68"/>
    </location>
</feature>
<sequence>MVEHDSSDESVNRRKYLKALTVGAAAGIAGCTGGGGTETESTESGNGNGSGGSTDDTETSGSSSGESWDSQLEVLHGWAGGDGEAAVTALIEAFEEEHPEMDTNFQAVGASANVNLNATILRRLANNNPMSSFANWPGKNLERYSGALMDLEADVWDAEGFKDTMQSRAVELCKFNDKMPAVPIGSHRMNNLFYNTAVFEEAGIDASSLDSVDALLDALETIDQNTDVTPMAQAMVAPWTNLQLWAQILTSQSGVEAYTNFIEGNPDRAAVVEALEALKTINENYITADASSISFTTAGQKVISGKAATIHQGNWVYGMFRADDSFNYKEQWDWIPFPGTEGIYFYHVDSIVAPSNNPSREETIAWQKFVGSKKAQIAFNNPKGSVPLRTDIDPSELTDFLAMTYEDLTDSEAYPPTIAHGLAVTPKTMGACKTAFGDNFMGPFNVEATADALVAAVSE</sequence>
<protein>
    <recommendedName>
        <fullName evidence="5">Xylose/arabinose-binding protein XacG</fullName>
    </recommendedName>
</protein>